<comment type="function">
    <text evidence="1 2 5">NAD(P)H-dependent oxidoreductase involved in metabolic inactivation of pro- and anti-inflammatory eicosanoids: prostaglandins (PG), leukotrienes (LT) and lipoxins (LX) (By similarity). Catalyzes with high efficiency the reduction of the 13,14 double bond of 15-oxoPGs, including 15-oxo-PGE1, 15-oxo-PGE2, 15-oxo-PGF1-alpha and 15-oxo-PGF2-alpha (By similarity) (PubMed:11524419). Catalyzes with lower efficiency the oxidation of the hydroxyl group at C12 of LTB4 and its derivatives, converting them into biologically less active 12-oxo-LTB4 metabolites (By similarity). Reduces 15-oxo-LXA4 to 13,14 dihydro-15-oxo-LXA4, enhancing neutrophil recruitment at the inflammatory site (By similarity). Plays a role in metabolic detoxification of alkenals and ketones. Reduces alpha,beta-unsaturated alkenals and ketones, particularly those with medium-chain length, showing highest affinity toward (2E)-decenal and (3E)-3-nonen-2-one (PubMed:11524419). Inactivates 4-hydroxy-2-nonenal, a cytotoxic lipid constituent of oxidized low-density lipoprotein particles (PubMed:11524419).</text>
</comment>
<comment type="catalytic activity">
    <reaction evidence="5">
        <text>13,14-dihydro-15-oxo-prostaglandin E1 + NADP(+) = 15-oxoprostaglandin E1 + NADPH + H(+)</text>
        <dbReference type="Rhea" id="RHEA:50584"/>
        <dbReference type="ChEBI" id="CHEBI:15378"/>
        <dbReference type="ChEBI" id="CHEBI:57401"/>
        <dbReference type="ChEBI" id="CHEBI:57783"/>
        <dbReference type="ChEBI" id="CHEBI:58349"/>
        <dbReference type="ChEBI" id="CHEBI:133408"/>
    </reaction>
    <physiologicalReaction direction="right-to-left" evidence="10">
        <dbReference type="Rhea" id="RHEA:50586"/>
    </physiologicalReaction>
</comment>
<comment type="catalytic activity">
    <reaction evidence="1">
        <text>13,14-dihydro-15-oxo-prostaglandin E2 + NADP(+) = 15-oxoprostaglandin E2 + NADPH + H(+)</text>
        <dbReference type="Rhea" id="RHEA:11912"/>
        <dbReference type="ChEBI" id="CHEBI:15378"/>
        <dbReference type="ChEBI" id="CHEBI:57400"/>
        <dbReference type="ChEBI" id="CHEBI:57402"/>
        <dbReference type="ChEBI" id="CHEBI:57783"/>
        <dbReference type="ChEBI" id="CHEBI:58349"/>
        <dbReference type="EC" id="1.3.1.48"/>
    </reaction>
    <physiologicalReaction direction="right-to-left" evidence="1">
        <dbReference type="Rhea" id="RHEA:11914"/>
    </physiologicalReaction>
</comment>
<comment type="catalytic activity">
    <reaction evidence="1">
        <text>13,14-dihydro-15-oxo-prostaglandin F1alpha + NADP(+) = 15-oxoprostaglandin F1alpha + NADPH + H(+)</text>
        <dbReference type="Rhea" id="RHEA:50592"/>
        <dbReference type="ChEBI" id="CHEBI:15378"/>
        <dbReference type="ChEBI" id="CHEBI:57783"/>
        <dbReference type="ChEBI" id="CHEBI:58349"/>
        <dbReference type="ChEBI" id="CHEBI:79072"/>
        <dbReference type="ChEBI" id="CHEBI:133411"/>
    </reaction>
    <physiologicalReaction direction="right-to-left" evidence="1">
        <dbReference type="Rhea" id="RHEA:50594"/>
    </physiologicalReaction>
</comment>
<comment type="catalytic activity">
    <reaction evidence="1">
        <text>13,14-dihydro-15-oxo-PGF2alpha + NADP(+) = 15-oxoprostaglandin F2alpha + NADPH + H(+)</text>
        <dbReference type="Rhea" id="RHEA:50588"/>
        <dbReference type="ChEBI" id="CHEBI:15378"/>
        <dbReference type="ChEBI" id="CHEBI:57783"/>
        <dbReference type="ChEBI" id="CHEBI:58349"/>
        <dbReference type="ChEBI" id="CHEBI:133374"/>
        <dbReference type="ChEBI" id="CHEBI:133409"/>
    </reaction>
    <physiologicalReaction direction="right-to-left" evidence="1">
        <dbReference type="Rhea" id="RHEA:50590"/>
    </physiologicalReaction>
</comment>
<comment type="catalytic activity">
    <reaction evidence="2 4">
        <text>leukotriene B4 + NADP(+) = 12-oxo-leukotriene B4 + NADPH + H(+)</text>
        <dbReference type="Rhea" id="RHEA:50608"/>
        <dbReference type="ChEBI" id="CHEBI:15378"/>
        <dbReference type="ChEBI" id="CHEBI:57461"/>
        <dbReference type="ChEBI" id="CHEBI:57783"/>
        <dbReference type="ChEBI" id="CHEBI:58349"/>
        <dbReference type="ChEBI" id="CHEBI:133309"/>
    </reaction>
    <physiologicalReaction direction="left-to-right" evidence="2 4">
        <dbReference type="Rhea" id="RHEA:50609"/>
    </physiologicalReaction>
</comment>
<comment type="catalytic activity">
    <reaction evidence="2">
        <text>20-hydroxy-leukotriene B4 + NADP(+) = 12-oxo-20-hydroxy-leukotriene B4 + NADPH + H(+)</text>
        <dbReference type="Rhea" id="RHEA:51208"/>
        <dbReference type="ChEBI" id="CHEBI:15378"/>
        <dbReference type="ChEBI" id="CHEBI:57460"/>
        <dbReference type="ChEBI" id="CHEBI:57783"/>
        <dbReference type="ChEBI" id="CHEBI:58349"/>
        <dbReference type="ChEBI" id="CHEBI:133346"/>
    </reaction>
    <physiologicalReaction direction="left-to-right" evidence="2">
        <dbReference type="Rhea" id="RHEA:51209"/>
    </physiologicalReaction>
</comment>
<comment type="catalytic activity">
    <reaction evidence="2">
        <text>6-trans-leukotriene B4 + NADP(+) = 12-oxo-(5S)-hydroxy-(6E,8E,10E,14Z)-eicosatetraenoate + NADPH + H(+)</text>
        <dbReference type="Rhea" id="RHEA:51204"/>
        <dbReference type="ChEBI" id="CHEBI:15378"/>
        <dbReference type="ChEBI" id="CHEBI:57783"/>
        <dbReference type="ChEBI" id="CHEBI:58349"/>
        <dbReference type="ChEBI" id="CHEBI:90723"/>
        <dbReference type="ChEBI" id="CHEBI:133974"/>
    </reaction>
    <physiologicalReaction direction="left-to-right" evidence="2">
        <dbReference type="Rhea" id="RHEA:51205"/>
    </physiologicalReaction>
</comment>
<comment type="catalytic activity">
    <reaction evidence="2">
        <text>(5S,12S)-dihydroxy-(6E,10E,12E,14Z)-eicosatetraenoate + NADP(+) = 12-oxo-(5S)-hydroxy-(6E,8E,10E,14Z)-eicosatetraenoate + NADPH + H(+)</text>
        <dbReference type="Rhea" id="RHEA:51212"/>
        <dbReference type="ChEBI" id="CHEBI:15378"/>
        <dbReference type="ChEBI" id="CHEBI:57783"/>
        <dbReference type="ChEBI" id="CHEBI:58349"/>
        <dbReference type="ChEBI" id="CHEBI:133974"/>
        <dbReference type="ChEBI" id="CHEBI:133975"/>
    </reaction>
    <physiologicalReaction direction="left-to-right" evidence="2">
        <dbReference type="Rhea" id="RHEA:51213"/>
    </physiologicalReaction>
</comment>
<comment type="catalytic activity">
    <reaction evidence="5">
        <text>an n-alkanal + NADP(+) = an alk-2-enal + NADPH + H(+)</text>
        <dbReference type="Rhea" id="RHEA:13737"/>
        <dbReference type="ChEBI" id="CHEBI:12834"/>
        <dbReference type="ChEBI" id="CHEBI:13757"/>
        <dbReference type="ChEBI" id="CHEBI:15378"/>
        <dbReference type="ChEBI" id="CHEBI:57783"/>
        <dbReference type="ChEBI" id="CHEBI:58349"/>
        <dbReference type="EC" id="1.3.1.74"/>
    </reaction>
    <physiologicalReaction direction="right-to-left" evidence="10">
        <dbReference type="Rhea" id="RHEA:13739"/>
    </physiologicalReaction>
</comment>
<comment type="catalytic activity">
    <reaction evidence="1">
        <text>hexanal + NADP(+) = (E)-hex-2-enal + NADPH + H(+)</text>
        <dbReference type="Rhea" id="RHEA:50776"/>
        <dbReference type="ChEBI" id="CHEBI:15378"/>
        <dbReference type="ChEBI" id="CHEBI:28913"/>
        <dbReference type="ChEBI" id="CHEBI:57783"/>
        <dbReference type="ChEBI" id="CHEBI:58349"/>
        <dbReference type="ChEBI" id="CHEBI:88528"/>
    </reaction>
    <physiologicalReaction direction="right-to-left" evidence="1">
        <dbReference type="Rhea" id="RHEA:50778"/>
    </physiologicalReaction>
</comment>
<comment type="catalytic activity">
    <reaction evidence="1">
        <text>octanal + NADP(+) = (2E)-octenal + NADPH + H(+)</text>
        <dbReference type="Rhea" id="RHEA:50780"/>
        <dbReference type="ChEBI" id="CHEBI:15378"/>
        <dbReference type="ChEBI" id="CHEBI:17935"/>
        <dbReference type="ChEBI" id="CHEBI:57783"/>
        <dbReference type="ChEBI" id="CHEBI:58349"/>
        <dbReference type="ChEBI" id="CHEBI:61748"/>
    </reaction>
    <physiologicalReaction direction="right-to-left" evidence="1">
        <dbReference type="Rhea" id="RHEA:50782"/>
    </physiologicalReaction>
</comment>
<comment type="catalytic activity">
    <reaction evidence="5">
        <text>decanal + NADP(+) = (2E)-decenal + NADPH + H(+)</text>
        <dbReference type="Rhea" id="RHEA:50612"/>
        <dbReference type="ChEBI" id="CHEBI:15378"/>
        <dbReference type="ChEBI" id="CHEBI:31457"/>
        <dbReference type="ChEBI" id="CHEBI:57783"/>
        <dbReference type="ChEBI" id="CHEBI:58349"/>
        <dbReference type="ChEBI" id="CHEBI:133455"/>
    </reaction>
    <physiologicalReaction direction="right-to-left" evidence="10">
        <dbReference type="Rhea" id="RHEA:50614"/>
    </physiologicalReaction>
</comment>
<comment type="catalytic activity">
    <reaction evidence="5">
        <text>dodecanal + NADP(+) = (2E)-dodecenal + NADPH + H(+)</text>
        <dbReference type="Rhea" id="RHEA:50784"/>
        <dbReference type="ChEBI" id="CHEBI:15378"/>
        <dbReference type="ChEBI" id="CHEBI:27836"/>
        <dbReference type="ChEBI" id="CHEBI:57783"/>
        <dbReference type="ChEBI" id="CHEBI:58349"/>
        <dbReference type="ChEBI" id="CHEBI:133741"/>
    </reaction>
    <physiologicalReaction direction="right-to-left" evidence="10">
        <dbReference type="Rhea" id="RHEA:50786"/>
    </physiologicalReaction>
</comment>
<comment type="catalytic activity">
    <reaction evidence="5">
        <text>4-hydroxynonanal + NADP(+) = (E)-4-hydroxynon-2-enal + NADPH + H(+)</text>
        <dbReference type="Rhea" id="RHEA:64736"/>
        <dbReference type="ChEBI" id="CHEBI:15378"/>
        <dbReference type="ChEBI" id="CHEBI:57783"/>
        <dbReference type="ChEBI" id="CHEBI:58349"/>
        <dbReference type="ChEBI" id="CHEBI:58968"/>
        <dbReference type="ChEBI" id="CHEBI:156112"/>
    </reaction>
    <physiologicalReaction direction="right-to-left" evidence="10">
        <dbReference type="Rhea" id="RHEA:64738"/>
    </physiologicalReaction>
</comment>
<comment type="catalytic activity">
    <reaction evidence="1">
        <text>pentan-2-one + NADP(+) = (E)-pent-3-en-2-one + NADPH + H(+)</text>
        <dbReference type="Rhea" id="RHEA:50788"/>
        <dbReference type="ChEBI" id="CHEBI:15378"/>
        <dbReference type="ChEBI" id="CHEBI:16472"/>
        <dbReference type="ChEBI" id="CHEBI:57783"/>
        <dbReference type="ChEBI" id="CHEBI:58349"/>
        <dbReference type="ChEBI" id="CHEBI:145276"/>
    </reaction>
    <physiologicalReaction direction="right-to-left" evidence="1">
        <dbReference type="Rhea" id="RHEA:50790"/>
    </physiologicalReaction>
</comment>
<comment type="catalytic activity">
    <reaction evidence="5">
        <text>nonan-2-one + NADP(+) = (3E)-nonen-2-one + NADPH + H(+)</text>
        <dbReference type="Rhea" id="RHEA:50616"/>
        <dbReference type="ChEBI" id="CHEBI:15378"/>
        <dbReference type="ChEBI" id="CHEBI:57783"/>
        <dbReference type="ChEBI" id="CHEBI:58349"/>
        <dbReference type="ChEBI" id="CHEBI:77927"/>
        <dbReference type="ChEBI" id="CHEBI:133457"/>
    </reaction>
    <physiologicalReaction direction="right-to-left" evidence="10">
        <dbReference type="Rhea" id="RHEA:50618"/>
    </physiologicalReaction>
</comment>
<comment type="subunit">
    <text evidence="4">Monomer or homodimer.</text>
</comment>
<comment type="subcellular location">
    <subcellularLocation>
        <location evidence="2">Cytoplasm</location>
    </subcellularLocation>
</comment>
<comment type="induction">
    <text evidence="6">Up-regulated by 1,2-dithiole-3-thione (D3T).</text>
</comment>
<comment type="similarity">
    <text evidence="9">Belongs to the NADP-dependent oxidoreductase L4BD family.</text>
</comment>
<dbReference type="EC" id="1.3.1.48" evidence="1"/>
<dbReference type="EC" id="1.3.1.74" evidence="5"/>
<dbReference type="EMBL" id="U66322">
    <property type="protein sequence ID" value="AAB88912.2"/>
    <property type="molecule type" value="mRNA"/>
</dbReference>
<dbReference type="EMBL" id="BC089775">
    <property type="protein sequence ID" value="AAH89775.1"/>
    <property type="molecule type" value="mRNA"/>
</dbReference>
<dbReference type="RefSeq" id="NP_620218.1">
    <property type="nucleotide sequence ID" value="NM_138863.2"/>
</dbReference>
<dbReference type="SMR" id="P97584"/>
<dbReference type="FunCoup" id="P97584">
    <property type="interactions" value="547"/>
</dbReference>
<dbReference type="STRING" id="10116.ENSRNOP00000020335"/>
<dbReference type="BindingDB" id="P97584"/>
<dbReference type="ChEMBL" id="CHEMBL4166"/>
<dbReference type="iPTMnet" id="P97584"/>
<dbReference type="PhosphoSitePlus" id="P97584"/>
<dbReference type="jPOST" id="P97584"/>
<dbReference type="PaxDb" id="10116-ENSRNOP00000020335"/>
<dbReference type="GeneID" id="192227"/>
<dbReference type="KEGG" id="rno:192227"/>
<dbReference type="UCSC" id="RGD:621195">
    <property type="organism name" value="rat"/>
</dbReference>
<dbReference type="AGR" id="RGD:621195"/>
<dbReference type="CTD" id="22949"/>
<dbReference type="RGD" id="621195">
    <property type="gene designation" value="Ptgr1"/>
</dbReference>
<dbReference type="VEuPathDB" id="HostDB:ENSRNOG00000015072"/>
<dbReference type="eggNOG" id="KOG1196">
    <property type="taxonomic scope" value="Eukaryota"/>
</dbReference>
<dbReference type="HOGENOM" id="CLU_026673_29_3_1"/>
<dbReference type="InParanoid" id="P97584"/>
<dbReference type="OrthoDB" id="28731at9989"/>
<dbReference type="PhylomeDB" id="P97584"/>
<dbReference type="TreeFam" id="TF324201"/>
<dbReference type="PRO" id="PR:P97584"/>
<dbReference type="Proteomes" id="UP000002494">
    <property type="component" value="Chromosome 5"/>
</dbReference>
<dbReference type="Bgee" id="ENSRNOG00000015072">
    <property type="expression patterns" value="Expressed in esophagus and 19 other cell types or tissues"/>
</dbReference>
<dbReference type="GO" id="GO:0005737">
    <property type="term" value="C:cytoplasm"/>
    <property type="evidence" value="ECO:0000314"/>
    <property type="project" value="RGD"/>
</dbReference>
<dbReference type="GO" id="GO:0005829">
    <property type="term" value="C:cytosol"/>
    <property type="evidence" value="ECO:0000314"/>
    <property type="project" value="RGD"/>
</dbReference>
<dbReference type="GO" id="GO:0005634">
    <property type="term" value="C:nucleus"/>
    <property type="evidence" value="ECO:0000314"/>
    <property type="project" value="RGD"/>
</dbReference>
<dbReference type="GO" id="GO:0036185">
    <property type="term" value="F:13-lipoxin reductase activity"/>
    <property type="evidence" value="ECO:0000250"/>
    <property type="project" value="UniProtKB"/>
</dbReference>
<dbReference type="GO" id="GO:0047522">
    <property type="term" value="F:15-oxoprostaglandin 13-oxidase [NAD(P)+] activity"/>
    <property type="evidence" value="ECO:0000314"/>
    <property type="project" value="UniProtKB"/>
</dbReference>
<dbReference type="GO" id="GO:0035798">
    <property type="term" value="F:2-alkenal reductase (NADPH) activity"/>
    <property type="evidence" value="ECO:0000314"/>
    <property type="project" value="UniProtKB"/>
</dbReference>
<dbReference type="GO" id="GO:0097257">
    <property type="term" value="F:leukotriene B4 12-hydroxy dehydrogenase activity"/>
    <property type="evidence" value="ECO:0000250"/>
    <property type="project" value="UniProtKB"/>
</dbReference>
<dbReference type="GO" id="GO:0043449">
    <property type="term" value="P:alkene metabolic process"/>
    <property type="evidence" value="ECO:0000314"/>
    <property type="project" value="RGD"/>
</dbReference>
<dbReference type="GO" id="GO:0036102">
    <property type="term" value="P:leukotriene B4 metabolic process"/>
    <property type="evidence" value="ECO:0000314"/>
    <property type="project" value="RGD"/>
</dbReference>
<dbReference type="GO" id="GO:2001302">
    <property type="term" value="P:lipoxin A4 metabolic process"/>
    <property type="evidence" value="ECO:0000250"/>
    <property type="project" value="UniProtKB"/>
</dbReference>
<dbReference type="GO" id="GO:0050928">
    <property type="term" value="P:negative regulation of positive chemotaxis"/>
    <property type="evidence" value="ECO:0000314"/>
    <property type="project" value="RGD"/>
</dbReference>
<dbReference type="GO" id="GO:1903427">
    <property type="term" value="P:negative regulation of reactive oxygen species biosynthetic process"/>
    <property type="evidence" value="ECO:0000314"/>
    <property type="project" value="RGD"/>
</dbReference>
<dbReference type="GO" id="GO:0006693">
    <property type="term" value="P:prostaglandin metabolic process"/>
    <property type="evidence" value="ECO:0000266"/>
    <property type="project" value="RGD"/>
</dbReference>
<dbReference type="GO" id="GO:0097327">
    <property type="term" value="P:response to antineoplastic agent"/>
    <property type="evidence" value="ECO:0000270"/>
    <property type="project" value="RGD"/>
</dbReference>
<dbReference type="CDD" id="cd08294">
    <property type="entry name" value="leukotriene_B4_DH_like"/>
    <property type="match status" value="1"/>
</dbReference>
<dbReference type="FunFam" id="3.40.50.720:FF:000121">
    <property type="entry name" value="Prostaglandin reductase 2"/>
    <property type="match status" value="1"/>
</dbReference>
<dbReference type="Gene3D" id="3.90.180.10">
    <property type="entry name" value="Medium-chain alcohol dehydrogenases, catalytic domain"/>
    <property type="match status" value="1"/>
</dbReference>
<dbReference type="Gene3D" id="3.40.50.720">
    <property type="entry name" value="NAD(P)-binding Rossmann-like Domain"/>
    <property type="match status" value="1"/>
</dbReference>
<dbReference type="InterPro" id="IPR013149">
    <property type="entry name" value="ADH-like_C"/>
</dbReference>
<dbReference type="InterPro" id="IPR041694">
    <property type="entry name" value="ADH_N_2"/>
</dbReference>
<dbReference type="InterPro" id="IPR011032">
    <property type="entry name" value="GroES-like_sf"/>
</dbReference>
<dbReference type="InterPro" id="IPR045010">
    <property type="entry name" value="MDR_fam"/>
</dbReference>
<dbReference type="InterPro" id="IPR036291">
    <property type="entry name" value="NAD(P)-bd_dom_sf"/>
</dbReference>
<dbReference type="InterPro" id="IPR020843">
    <property type="entry name" value="PKS_ER"/>
</dbReference>
<dbReference type="InterPro" id="IPR014190">
    <property type="entry name" value="PTGR1"/>
</dbReference>
<dbReference type="NCBIfam" id="TIGR02825">
    <property type="entry name" value="B4_12hDH"/>
    <property type="match status" value="1"/>
</dbReference>
<dbReference type="PANTHER" id="PTHR43205">
    <property type="entry name" value="PROSTAGLANDIN REDUCTASE"/>
    <property type="match status" value="1"/>
</dbReference>
<dbReference type="PANTHER" id="PTHR43205:SF7">
    <property type="entry name" value="PROSTAGLANDIN REDUCTASE 1"/>
    <property type="match status" value="1"/>
</dbReference>
<dbReference type="Pfam" id="PF16884">
    <property type="entry name" value="ADH_N_2"/>
    <property type="match status" value="1"/>
</dbReference>
<dbReference type="Pfam" id="PF00107">
    <property type="entry name" value="ADH_zinc_N"/>
    <property type="match status" value="1"/>
</dbReference>
<dbReference type="SMART" id="SM00829">
    <property type="entry name" value="PKS_ER"/>
    <property type="match status" value="1"/>
</dbReference>
<dbReference type="SUPFAM" id="SSF50129">
    <property type="entry name" value="GroES-like"/>
    <property type="match status" value="2"/>
</dbReference>
<dbReference type="SUPFAM" id="SSF51735">
    <property type="entry name" value="NAD(P)-binding Rossmann-fold domains"/>
    <property type="match status" value="1"/>
</dbReference>
<name>PTGR1_RAT</name>
<accession>P97584</accession>
<accession>Q5EBD3</accession>
<feature type="chain" id="PRO_0000218069" description="Prostaglandin reductase 1">
    <location>
        <begin position="1"/>
        <end position="329"/>
    </location>
</feature>
<feature type="binding site" evidence="1">
    <location>
        <begin position="152"/>
        <end position="155"/>
    </location>
    <ligand>
        <name>NADP(+)</name>
        <dbReference type="ChEBI" id="CHEBI:58349"/>
    </ligand>
</feature>
<feature type="binding site" evidence="1">
    <location>
        <position position="178"/>
    </location>
    <ligand>
        <name>NADP(+)</name>
        <dbReference type="ChEBI" id="CHEBI:58349"/>
    </ligand>
</feature>
<feature type="binding site" evidence="1">
    <location>
        <position position="193"/>
    </location>
    <ligand>
        <name>NADP(+)</name>
        <dbReference type="ChEBI" id="CHEBI:58349"/>
    </ligand>
</feature>
<feature type="binding site" evidence="1">
    <location>
        <position position="217"/>
    </location>
    <ligand>
        <name>NADP(+)</name>
        <dbReference type="ChEBI" id="CHEBI:58349"/>
    </ligand>
</feature>
<feature type="binding site" evidence="1">
    <location>
        <begin position="239"/>
        <end position="245"/>
    </location>
    <ligand>
        <name>NADP(+)</name>
        <dbReference type="ChEBI" id="CHEBI:58349"/>
    </ligand>
</feature>
<feature type="binding site" evidence="1">
    <location>
        <begin position="270"/>
        <end position="272"/>
    </location>
    <ligand>
        <name>NADP(+)</name>
        <dbReference type="ChEBI" id="CHEBI:58349"/>
    </ligand>
</feature>
<feature type="binding site" evidence="1">
    <location>
        <position position="321"/>
    </location>
    <ligand>
        <name>NADP(+)</name>
        <dbReference type="ChEBI" id="CHEBI:58349"/>
    </ligand>
</feature>
<feature type="modified residue" description="Phosphothreonine" evidence="1">
    <location>
        <position position="18"/>
    </location>
</feature>
<feature type="modified residue" description="Phosphoserine" evidence="1">
    <location>
        <position position="20"/>
    </location>
</feature>
<feature type="modified residue" description="N6-(2-hydroxyisobutyryl)lysine; alternate" evidence="1">
    <location>
        <position position="178"/>
    </location>
</feature>
<feature type="modified residue" description="N6-acetyllysine; alternate" evidence="3">
    <location>
        <position position="178"/>
    </location>
</feature>
<evidence type="ECO:0000250" key="1">
    <source>
        <dbReference type="UniProtKB" id="Q14914"/>
    </source>
</evidence>
<evidence type="ECO:0000250" key="2">
    <source>
        <dbReference type="UniProtKB" id="Q29073"/>
    </source>
</evidence>
<evidence type="ECO:0000250" key="3">
    <source>
        <dbReference type="UniProtKB" id="Q91YR9"/>
    </source>
</evidence>
<evidence type="ECO:0000250" key="4">
    <source>
        <dbReference type="UniProtKB" id="Q9EQZ5"/>
    </source>
</evidence>
<evidence type="ECO:0000269" key="5">
    <source>
    </source>
</evidence>
<evidence type="ECO:0000269" key="6">
    <source>
    </source>
</evidence>
<evidence type="ECO:0000303" key="7">
    <source>
    </source>
</evidence>
<evidence type="ECO:0000303" key="8">
    <source>
    </source>
</evidence>
<evidence type="ECO:0000305" key="9"/>
<evidence type="ECO:0000305" key="10">
    <source>
    </source>
</evidence>
<gene>
    <name type="primary">Ptgr1</name>
    <name type="synonym">Dig1</name>
    <name type="synonym">Ltb4dh</name>
</gene>
<organism>
    <name type="scientific">Rattus norvegicus</name>
    <name type="common">Rat</name>
    <dbReference type="NCBI Taxonomy" id="10116"/>
    <lineage>
        <taxon>Eukaryota</taxon>
        <taxon>Metazoa</taxon>
        <taxon>Chordata</taxon>
        <taxon>Craniata</taxon>
        <taxon>Vertebrata</taxon>
        <taxon>Euteleostomi</taxon>
        <taxon>Mammalia</taxon>
        <taxon>Eutheria</taxon>
        <taxon>Euarchontoglires</taxon>
        <taxon>Glires</taxon>
        <taxon>Rodentia</taxon>
        <taxon>Myomorpha</taxon>
        <taxon>Muroidea</taxon>
        <taxon>Muridae</taxon>
        <taxon>Murinae</taxon>
        <taxon>Rattus</taxon>
    </lineage>
</organism>
<protein>
    <recommendedName>
        <fullName>Prostaglandin reductase 1</fullName>
        <shortName evidence="1">PRG-1</shortName>
    </recommendedName>
    <alternativeName>
        <fullName evidence="7">15-oxoprostaglandin 13-reductase</fullName>
        <ecNumber evidence="1">1.3.1.48</ecNumber>
    </alternativeName>
    <alternativeName>
        <fullName evidence="8">Dithiolethione-inducible gene 1 protein</fullName>
        <shortName evidence="8">D3T-inducible gene 1 protein</shortName>
        <shortName evidence="8">DIG-1</shortName>
    </alternativeName>
    <alternativeName>
        <fullName evidence="7">Leukotriene B4 12-hydroxydehydrogenase</fullName>
    </alternativeName>
    <alternativeName>
        <fullName>NAD(P)H-dependent alkenal/one oxidoreductase</fullName>
        <ecNumber evidence="5">1.3.1.74</ecNumber>
    </alternativeName>
</protein>
<proteinExistence type="evidence at protein level"/>
<sequence length="329" mass="35718">MVQAKTWTLKKHFEGFPTDSNFELRTTELPPLNNGEVLLEALFLSVDPYMRVAAKKLKEGDSMMGEQVARVVESKNSAFPTGTIVVALLGWTSHSISDGNGLRKLPAEWPDKLPLSLALGTVGMPGLTAYFGLLDICGLKGGETVLVNAAAGAVGSVVGQIAKLKGCKVVGTAGSDEKVAYLKKLGFDVAFNYKTVKSLEEALRTASPDGYDCYFDNVGGEFSNTVILQMKTFGRIAICGAISQYNRTGPCPPGPSPEVIIYQQLRMEGFIVTRWQGEVRQKALTDLMNWVSEGKIRYHEYITEGFEKMPAAFMGMLKGDNLGKTIVKA</sequence>
<reference key="1">
    <citation type="journal article" date="1996" name="Carcinogenesis">
        <title>Isolation of cDNAs representing dithiolethione-responsive genes.</title>
        <authorList>
            <person name="Primiano T."/>
            <person name="Gastel J.A."/>
            <person name="Kensler T.W."/>
            <person name="Sutter T.R."/>
        </authorList>
    </citation>
    <scope>NUCLEOTIDE SEQUENCE [MRNA]</scope>
    <scope>INDUCTION BY DITHIOLETHIONE</scope>
    <source>
        <strain>Fischer 344</strain>
    </source>
</reference>
<reference key="2">
    <citation type="submission" date="1999-10" db="EMBL/GenBank/DDBJ databases">
        <authorList>
            <person name="Kensler T.W."/>
        </authorList>
    </citation>
    <scope>SEQUENCE REVISION</scope>
</reference>
<reference key="3">
    <citation type="journal article" date="2004" name="Genome Res.">
        <title>The status, quality, and expansion of the NIH full-length cDNA project: the Mammalian Gene Collection (MGC).</title>
        <authorList>
            <consortium name="The MGC Project Team"/>
        </authorList>
    </citation>
    <scope>NUCLEOTIDE SEQUENCE [LARGE SCALE MRNA]</scope>
    <source>
        <tissue>Ovary</tissue>
    </source>
</reference>
<reference key="4">
    <citation type="journal article" date="2001" name="J. Biol. Chem.">
        <title>Antioxidative function and substrate specificity of NAD(P)H-dependent alkenal/one oxidoreductase. A new role for leukotriene B4 12-hydroxydehydrogenase/15-oxoprostaglandin 13-reductase.</title>
        <authorList>
            <person name="Dick R.A."/>
            <person name="Kwak M.K."/>
            <person name="Sutter T.R."/>
            <person name="Kensler T.W."/>
        </authorList>
    </citation>
    <scope>FUNCTION</scope>
    <scope>CATALYTIC ACTIVITY</scope>
</reference>
<keyword id="KW-0007">Acetylation</keyword>
<keyword id="KW-0963">Cytoplasm</keyword>
<keyword id="KW-0276">Fatty acid metabolism</keyword>
<keyword id="KW-0379">Hydroxylation</keyword>
<keyword id="KW-0443">Lipid metabolism</keyword>
<keyword id="KW-0521">NADP</keyword>
<keyword id="KW-0560">Oxidoreductase</keyword>
<keyword id="KW-0597">Phosphoprotein</keyword>
<keyword id="KW-0644">Prostaglandin metabolism</keyword>
<keyword id="KW-1185">Reference proteome</keyword>